<keyword id="KW-0375">Hydrogen ion transport</keyword>
<keyword id="KW-0406">Ion transport</keyword>
<keyword id="KW-0472">Membrane</keyword>
<keyword id="KW-1185">Reference proteome</keyword>
<keyword id="KW-0812">Transmembrane</keyword>
<keyword id="KW-1133">Transmembrane helix</keyword>
<keyword id="KW-0813">Transport</keyword>
<keyword id="KW-0926">Vacuole</keyword>
<accession>Q69Z14</accession>
<evidence type="ECO:0000250" key="1">
    <source>
        <dbReference type="UniProtKB" id="Q3E7B6"/>
    </source>
</evidence>
<evidence type="ECO:0000255" key="2"/>
<evidence type="ECO:0000305" key="3"/>
<reference key="1">
    <citation type="journal article" date="2002" name="Nature">
        <title>The genome sequence of Schizosaccharomyces pombe.</title>
        <authorList>
            <person name="Wood V."/>
            <person name="Gwilliam R."/>
            <person name="Rajandream M.A."/>
            <person name="Lyne M.H."/>
            <person name="Lyne R."/>
            <person name="Stewart A."/>
            <person name="Sgouros J.G."/>
            <person name="Peat N."/>
            <person name="Hayles J."/>
            <person name="Baker S.G."/>
            <person name="Basham D."/>
            <person name="Bowman S."/>
            <person name="Brooks K."/>
            <person name="Brown D."/>
            <person name="Brown S."/>
            <person name="Chillingworth T."/>
            <person name="Churcher C.M."/>
            <person name="Collins M."/>
            <person name="Connor R."/>
            <person name="Cronin A."/>
            <person name="Davis P."/>
            <person name="Feltwell T."/>
            <person name="Fraser A."/>
            <person name="Gentles S."/>
            <person name="Goble A."/>
            <person name="Hamlin N."/>
            <person name="Harris D.E."/>
            <person name="Hidalgo J."/>
            <person name="Hodgson G."/>
            <person name="Holroyd S."/>
            <person name="Hornsby T."/>
            <person name="Howarth S."/>
            <person name="Huckle E.J."/>
            <person name="Hunt S."/>
            <person name="Jagels K."/>
            <person name="James K.D."/>
            <person name="Jones L."/>
            <person name="Jones M."/>
            <person name="Leather S."/>
            <person name="McDonald S."/>
            <person name="McLean J."/>
            <person name="Mooney P."/>
            <person name="Moule S."/>
            <person name="Mungall K.L."/>
            <person name="Murphy L.D."/>
            <person name="Niblett D."/>
            <person name="Odell C."/>
            <person name="Oliver K."/>
            <person name="O'Neil S."/>
            <person name="Pearson D."/>
            <person name="Quail M.A."/>
            <person name="Rabbinowitsch E."/>
            <person name="Rutherford K.M."/>
            <person name="Rutter S."/>
            <person name="Saunders D."/>
            <person name="Seeger K."/>
            <person name="Sharp S."/>
            <person name="Skelton J."/>
            <person name="Simmonds M.N."/>
            <person name="Squares R."/>
            <person name="Squares S."/>
            <person name="Stevens K."/>
            <person name="Taylor K."/>
            <person name="Taylor R.G."/>
            <person name="Tivey A."/>
            <person name="Walsh S.V."/>
            <person name="Warren T."/>
            <person name="Whitehead S."/>
            <person name="Woodward J.R."/>
            <person name="Volckaert G."/>
            <person name="Aert R."/>
            <person name="Robben J."/>
            <person name="Grymonprez B."/>
            <person name="Weltjens I."/>
            <person name="Vanstreels E."/>
            <person name="Rieger M."/>
            <person name="Schaefer M."/>
            <person name="Mueller-Auer S."/>
            <person name="Gabel C."/>
            <person name="Fuchs M."/>
            <person name="Duesterhoeft A."/>
            <person name="Fritzc C."/>
            <person name="Holzer E."/>
            <person name="Moestl D."/>
            <person name="Hilbert H."/>
            <person name="Borzym K."/>
            <person name="Langer I."/>
            <person name="Beck A."/>
            <person name="Lehrach H."/>
            <person name="Reinhardt R."/>
            <person name="Pohl T.M."/>
            <person name="Eger P."/>
            <person name="Zimmermann W."/>
            <person name="Wedler H."/>
            <person name="Wambutt R."/>
            <person name="Purnelle B."/>
            <person name="Goffeau A."/>
            <person name="Cadieu E."/>
            <person name="Dreano S."/>
            <person name="Gloux S."/>
            <person name="Lelaure V."/>
            <person name="Mottier S."/>
            <person name="Galibert F."/>
            <person name="Aves S.J."/>
            <person name="Xiang Z."/>
            <person name="Hunt C."/>
            <person name="Moore K."/>
            <person name="Hurst S.M."/>
            <person name="Lucas M."/>
            <person name="Rochet M."/>
            <person name="Gaillardin C."/>
            <person name="Tallada V.A."/>
            <person name="Garzon A."/>
            <person name="Thode G."/>
            <person name="Daga R.R."/>
            <person name="Cruzado L."/>
            <person name="Jimenez J."/>
            <person name="Sanchez M."/>
            <person name="del Rey F."/>
            <person name="Benito J."/>
            <person name="Dominguez A."/>
            <person name="Revuelta J.L."/>
            <person name="Moreno S."/>
            <person name="Armstrong J."/>
            <person name="Forsburg S.L."/>
            <person name="Cerutti L."/>
            <person name="Lowe T."/>
            <person name="McCombie W.R."/>
            <person name="Paulsen I."/>
            <person name="Potashkin J."/>
            <person name="Shpakovski G.V."/>
            <person name="Ussery D."/>
            <person name="Barrell B.G."/>
            <person name="Nurse P."/>
        </authorList>
    </citation>
    <scope>NUCLEOTIDE SEQUENCE [LARGE SCALE GENOMIC DNA]</scope>
    <source>
        <strain>972 / ATCC 24843</strain>
    </source>
</reference>
<reference key="2">
    <citation type="journal article" date="2011" name="Science">
        <title>Comparative functional genomics of the fission yeasts.</title>
        <authorList>
            <person name="Rhind N."/>
            <person name="Chen Z."/>
            <person name="Yassour M."/>
            <person name="Thompson D.A."/>
            <person name="Haas B.J."/>
            <person name="Habib N."/>
            <person name="Wapinski I."/>
            <person name="Roy S."/>
            <person name="Lin M.F."/>
            <person name="Heiman D.I."/>
            <person name="Young S.K."/>
            <person name="Furuya K."/>
            <person name="Guo Y."/>
            <person name="Pidoux A."/>
            <person name="Chen H.M."/>
            <person name="Robbertse B."/>
            <person name="Goldberg J.M."/>
            <person name="Aoki K."/>
            <person name="Bayne E.H."/>
            <person name="Berlin A.M."/>
            <person name="Desjardins C.A."/>
            <person name="Dobbs E."/>
            <person name="Dukaj L."/>
            <person name="Fan L."/>
            <person name="FitzGerald M.G."/>
            <person name="French C."/>
            <person name="Gujja S."/>
            <person name="Hansen K."/>
            <person name="Keifenheim D."/>
            <person name="Levin J.Z."/>
            <person name="Mosher R.A."/>
            <person name="Mueller C.A."/>
            <person name="Pfiffner J."/>
            <person name="Priest M."/>
            <person name="Russ C."/>
            <person name="Smialowska A."/>
            <person name="Swoboda P."/>
            <person name="Sykes S.M."/>
            <person name="Vaughn M."/>
            <person name="Vengrova S."/>
            <person name="Yoder R."/>
            <person name="Zeng Q."/>
            <person name="Allshire R."/>
            <person name="Baulcombe D."/>
            <person name="Birren B.W."/>
            <person name="Brown W."/>
            <person name="Ekwall K."/>
            <person name="Kellis M."/>
            <person name="Leatherwood J."/>
            <person name="Levin H."/>
            <person name="Margalit H."/>
            <person name="Martienssen R."/>
            <person name="Nieduszynski C.A."/>
            <person name="Spatafora J.W."/>
            <person name="Friedman N."/>
            <person name="Dalgaard J.Z."/>
            <person name="Baumann P."/>
            <person name="Niki H."/>
            <person name="Regev A."/>
            <person name="Nusbaum C."/>
        </authorList>
    </citation>
    <scope>REVISION OF GENE MODEL</scope>
</reference>
<organism>
    <name type="scientific">Schizosaccharomyces pombe (strain 972 / ATCC 24843)</name>
    <name type="common">Fission yeast</name>
    <dbReference type="NCBI Taxonomy" id="284812"/>
    <lineage>
        <taxon>Eukaryota</taxon>
        <taxon>Fungi</taxon>
        <taxon>Dikarya</taxon>
        <taxon>Ascomycota</taxon>
        <taxon>Taphrinomycotina</taxon>
        <taxon>Schizosaccharomycetes</taxon>
        <taxon>Schizosaccharomycetales</taxon>
        <taxon>Schizosaccharomycetaceae</taxon>
        <taxon>Schizosaccharomyces</taxon>
    </lineage>
</organism>
<name>VA0E_SCHPO</name>
<comment type="function">
    <text evidence="1">Subunit of the V0 complex of vacuolar(H+)-ATPase (V-ATPase), a multisubunit enzyme composed of a peripheral complex (V1) that hydrolyzes ATP and a membrane integral complex (V0) that translocates protons (By similarity). V-ATPase is responsible for acidifying and maintaining the pH of intracellular compartments (By similarity).</text>
</comment>
<comment type="subunit">
    <text evidence="1">V-ATPase is a heteromultimeric enzyme composed of a peripheral catalytic V1 complex (components A to H) attached to an integral membrane V0 proton pore complex (components: a, c, c', c'', d, e, f and VOA1).</text>
</comment>
<comment type="subcellular location">
    <subcellularLocation>
        <location evidence="1">Vacuole membrane</location>
        <topology evidence="2">Multi-pass membrane protein</topology>
    </subcellularLocation>
</comment>
<comment type="similarity">
    <text evidence="3">Belongs to the V-ATPase e1/e2 subunit family.</text>
</comment>
<gene>
    <name type="primary">vma9</name>
    <name type="ORF">SPBC1685.16</name>
</gene>
<proteinExistence type="inferred from homology"/>
<feature type="chain" id="PRO_0000071736" description="V-type proton ATPase subunit e">
    <location>
        <begin position="1"/>
        <end position="67"/>
    </location>
</feature>
<feature type="topological domain" description="Lumenal" evidence="3">
    <location>
        <begin position="1"/>
        <end position="2"/>
    </location>
</feature>
<feature type="transmembrane region" description="Helical" evidence="2">
    <location>
        <begin position="3"/>
        <end position="23"/>
    </location>
</feature>
<feature type="topological domain" description="Cytoplasmic" evidence="3">
    <location>
        <begin position="24"/>
        <end position="35"/>
    </location>
</feature>
<feature type="transmembrane region" description="Helical" evidence="2">
    <location>
        <begin position="36"/>
        <end position="56"/>
    </location>
</feature>
<feature type="topological domain" description="Lumenal" evidence="3">
    <location>
        <begin position="57"/>
        <end position="67"/>
    </location>
</feature>
<protein>
    <recommendedName>
        <fullName>V-type proton ATPase subunit e</fullName>
        <shortName>V-ATPase subunit e</shortName>
    </recommendedName>
    <alternativeName>
        <fullName>Vacuolar proton pump subunit e</fullName>
    </alternativeName>
</protein>
<dbReference type="EMBL" id="CU329671">
    <property type="protein sequence ID" value="CAH05006.2"/>
    <property type="molecule type" value="Genomic_DNA"/>
</dbReference>
<dbReference type="RefSeq" id="NP_001018781.2">
    <property type="nucleotide sequence ID" value="NM_001021114.2"/>
</dbReference>
<dbReference type="SMR" id="Q69Z14"/>
<dbReference type="FunCoup" id="Q69Z14">
    <property type="interactions" value="104"/>
</dbReference>
<dbReference type="STRING" id="284812.Q69Z14"/>
<dbReference type="PaxDb" id="4896-SPBC1685.16.1"/>
<dbReference type="EnsemblFungi" id="SPBC1685.16.1">
    <property type="protein sequence ID" value="SPBC1685.16.1:pep"/>
    <property type="gene ID" value="SPBC1685.16"/>
</dbReference>
<dbReference type="PomBase" id="SPBC1685.16">
    <property type="gene designation" value="vma9"/>
</dbReference>
<dbReference type="VEuPathDB" id="FungiDB:SPBC1685.16"/>
<dbReference type="eggNOG" id="ENOG502S76V">
    <property type="taxonomic scope" value="Eukaryota"/>
</dbReference>
<dbReference type="HOGENOM" id="CLU_170555_1_0_1"/>
<dbReference type="InParanoid" id="Q69Z14"/>
<dbReference type="OMA" id="WAITYLC"/>
<dbReference type="PhylomeDB" id="Q69Z14"/>
<dbReference type="Reactome" id="R-SPO-1222556">
    <property type="pathway name" value="ROS and RNS production in phagocytes"/>
</dbReference>
<dbReference type="Reactome" id="R-SPO-77387">
    <property type="pathway name" value="Insulin receptor recycling"/>
</dbReference>
<dbReference type="Reactome" id="R-SPO-917977">
    <property type="pathway name" value="Transferrin endocytosis and recycling"/>
</dbReference>
<dbReference type="Reactome" id="R-SPO-9639288">
    <property type="pathway name" value="Amino acids regulate mTORC1"/>
</dbReference>
<dbReference type="PRO" id="PR:Q69Z14"/>
<dbReference type="Proteomes" id="UP000002485">
    <property type="component" value="Chromosome II"/>
</dbReference>
<dbReference type="GO" id="GO:0000329">
    <property type="term" value="C:fungal-type vacuole membrane"/>
    <property type="evidence" value="ECO:0000266"/>
    <property type="project" value="PomBase"/>
</dbReference>
<dbReference type="GO" id="GO:0000220">
    <property type="term" value="C:vacuolar proton-transporting V-type ATPase, V0 domain"/>
    <property type="evidence" value="ECO:0000318"/>
    <property type="project" value="GO_Central"/>
</dbReference>
<dbReference type="GO" id="GO:0016887">
    <property type="term" value="F:ATP hydrolysis activity"/>
    <property type="evidence" value="ECO:0000305"/>
    <property type="project" value="PomBase"/>
</dbReference>
<dbReference type="GO" id="GO:0046961">
    <property type="term" value="F:proton-transporting ATPase activity, rotational mechanism"/>
    <property type="evidence" value="ECO:0007669"/>
    <property type="project" value="InterPro"/>
</dbReference>
<dbReference type="GO" id="GO:1902600">
    <property type="term" value="P:proton transmembrane transport"/>
    <property type="evidence" value="ECO:0000305"/>
    <property type="project" value="PomBase"/>
</dbReference>
<dbReference type="GO" id="GO:0055085">
    <property type="term" value="P:transmembrane transport"/>
    <property type="evidence" value="ECO:0000318"/>
    <property type="project" value="GO_Central"/>
</dbReference>
<dbReference type="GO" id="GO:0007035">
    <property type="term" value="P:vacuolar acidification"/>
    <property type="evidence" value="ECO:0000318"/>
    <property type="project" value="GO_Central"/>
</dbReference>
<dbReference type="InterPro" id="IPR008389">
    <property type="entry name" value="ATPase_V0-cplx_e1/e2_su"/>
</dbReference>
<dbReference type="PANTHER" id="PTHR12263:SF0">
    <property type="entry name" value="V-TYPE PROTON ATPASE SUBUNIT"/>
    <property type="match status" value="1"/>
</dbReference>
<dbReference type="PANTHER" id="PTHR12263">
    <property type="entry name" value="VACUOLAR ATP SYNTHASE SUBUNIT H"/>
    <property type="match status" value="1"/>
</dbReference>
<dbReference type="Pfam" id="PF05493">
    <property type="entry name" value="ATP_synt_H"/>
    <property type="match status" value="1"/>
</dbReference>
<sequence length="67" mass="7378">MGGLVVLLVGLLTALMSVVSYYVSPKGNNTSTWQMSLILTFSCCYLLWAITYLAQLHPLEAPSRVLE</sequence>